<feature type="chain" id="PRO_0000114273" description="Chromosomal replication initiator protein DnaA">
    <location>
        <begin position="1"/>
        <end position="453"/>
    </location>
</feature>
<feature type="region of interest" description="Domain I, interacts with DnaA modulators" evidence="1">
    <location>
        <begin position="1"/>
        <end position="74"/>
    </location>
</feature>
<feature type="region of interest" description="Domain II" evidence="1">
    <location>
        <begin position="74"/>
        <end position="113"/>
    </location>
</feature>
<feature type="region of interest" description="Domain III, AAA+ region" evidence="1">
    <location>
        <begin position="114"/>
        <end position="331"/>
    </location>
</feature>
<feature type="region of interest" description="Domain IV, binds dsDNA" evidence="1">
    <location>
        <begin position="332"/>
        <end position="453"/>
    </location>
</feature>
<feature type="binding site" evidence="1">
    <location>
        <position position="158"/>
    </location>
    <ligand>
        <name>ATP</name>
        <dbReference type="ChEBI" id="CHEBI:30616"/>
    </ligand>
</feature>
<feature type="binding site" evidence="1">
    <location>
        <position position="160"/>
    </location>
    <ligand>
        <name>ATP</name>
        <dbReference type="ChEBI" id="CHEBI:30616"/>
    </ligand>
</feature>
<feature type="binding site" evidence="1">
    <location>
        <position position="161"/>
    </location>
    <ligand>
        <name>ATP</name>
        <dbReference type="ChEBI" id="CHEBI:30616"/>
    </ligand>
</feature>
<feature type="binding site" evidence="1">
    <location>
        <position position="162"/>
    </location>
    <ligand>
        <name>ATP</name>
        <dbReference type="ChEBI" id="CHEBI:30616"/>
    </ligand>
</feature>
<feature type="sequence conflict" description="In Ref. 1; AAC45336." evidence="2" ref="1">
    <original>V</original>
    <variation>G</variation>
    <location>
        <position position="90"/>
    </location>
</feature>
<feature type="sequence conflict" description="In Ref. 1; AAC45336." evidence="2" ref="1">
    <original>N</original>
    <variation>D</variation>
    <location>
        <position position="100"/>
    </location>
</feature>
<reference key="1">
    <citation type="journal article" date="1998" name="Microbiology">
        <title>Organization around the dnaA gene of Streptococcus pneumoniae.</title>
        <authorList>
            <person name="Gasc A.M."/>
            <person name="Giammarinaro P."/>
            <person name="Richter S."/>
            <person name="Sicard M."/>
        </authorList>
    </citation>
    <scope>NUCLEOTIDE SEQUENCE [GENOMIC DNA]</scope>
    <source>
        <strain>R6 / R801</strain>
    </source>
</reference>
<reference key="2">
    <citation type="journal article" date="2001" name="Science">
        <title>Complete genome sequence of a virulent isolate of Streptococcus pneumoniae.</title>
        <authorList>
            <person name="Tettelin H."/>
            <person name="Nelson K.E."/>
            <person name="Paulsen I.T."/>
            <person name="Eisen J.A."/>
            <person name="Read T.D."/>
            <person name="Peterson S.N."/>
            <person name="Heidelberg J.F."/>
            <person name="DeBoy R.T."/>
            <person name="Haft D.H."/>
            <person name="Dodson R.J."/>
            <person name="Durkin A.S."/>
            <person name="Gwinn M.L."/>
            <person name="Kolonay J.F."/>
            <person name="Nelson W.C."/>
            <person name="Peterson J.D."/>
            <person name="Umayam L.A."/>
            <person name="White O."/>
            <person name="Salzberg S.L."/>
            <person name="Lewis M.R."/>
            <person name="Radune D."/>
            <person name="Holtzapple E.K."/>
            <person name="Khouri H.M."/>
            <person name="Wolf A.M."/>
            <person name="Utterback T.R."/>
            <person name="Hansen C.L."/>
            <person name="McDonald L.A."/>
            <person name="Feldblyum T.V."/>
            <person name="Angiuoli S.V."/>
            <person name="Dickinson T."/>
            <person name="Hickey E.K."/>
            <person name="Holt I.E."/>
            <person name="Loftus B.J."/>
            <person name="Yang F."/>
            <person name="Smith H.O."/>
            <person name="Venter J.C."/>
            <person name="Dougherty B.A."/>
            <person name="Morrison D.A."/>
            <person name="Hollingshead S.K."/>
            <person name="Fraser C.M."/>
        </authorList>
    </citation>
    <scope>NUCLEOTIDE SEQUENCE [LARGE SCALE GENOMIC DNA]</scope>
    <source>
        <strain>ATCC BAA-334 / TIGR4</strain>
    </source>
</reference>
<comment type="function">
    <text evidence="1">Plays an essential role in the initiation and regulation of chromosomal replication. ATP-DnaA binds to the origin of replication (oriC) to initiate formation of the DNA replication initiation complex once per cell cycle. Binds the DnaA box (a 9 base pair repeat at the origin) and separates the double-stranded (ds)DNA. Forms a right-handed helical filament on oriC DNA; dsDNA binds to the exterior of the filament while single-stranded (ss)DNA is stabiized in the filament's interior. The ATP-DnaA-oriC complex binds and stabilizes one strand of the AT-rich DNA unwinding element (DUE), permitting loading of DNA polymerase. After initiation quickly degrades to an ADP-DnaA complex that is not apt for DNA replication. Binds acidic phospholipids.</text>
</comment>
<comment type="subunit">
    <text evidence="1">Oligomerizes as a right-handed, spiral filament on DNA at oriC.</text>
</comment>
<comment type="subcellular location">
    <subcellularLocation>
        <location evidence="1">Cytoplasm</location>
    </subcellularLocation>
</comment>
<comment type="domain">
    <text evidence="1">Domain I is involved in oligomerization and binding regulators, domain II is flexibile and of varying length in different bacteria, domain III forms the AAA+ region, while domain IV binds dsDNA.</text>
</comment>
<comment type="similarity">
    <text evidence="1 2">Belongs to the DnaA family.</text>
</comment>
<evidence type="ECO:0000255" key="1">
    <source>
        <dbReference type="HAMAP-Rule" id="MF_00377"/>
    </source>
</evidence>
<evidence type="ECO:0000305" key="2"/>
<accession>O08397</accession>
<name>DNAA_STRPN</name>
<protein>
    <recommendedName>
        <fullName evidence="1">Chromosomal replication initiator protein DnaA</fullName>
    </recommendedName>
</protein>
<organism>
    <name type="scientific">Streptococcus pneumoniae serotype 4 (strain ATCC BAA-334 / TIGR4)</name>
    <dbReference type="NCBI Taxonomy" id="170187"/>
    <lineage>
        <taxon>Bacteria</taxon>
        <taxon>Bacillati</taxon>
        <taxon>Bacillota</taxon>
        <taxon>Bacilli</taxon>
        <taxon>Lactobacillales</taxon>
        <taxon>Streptococcaceae</taxon>
        <taxon>Streptococcus</taxon>
    </lineage>
</organism>
<dbReference type="EMBL" id="AF000658">
    <property type="protein sequence ID" value="AAC45336.1"/>
    <property type="molecule type" value="Genomic_DNA"/>
</dbReference>
<dbReference type="EMBL" id="AE005672">
    <property type="protein sequence ID" value="AAK74194.1"/>
    <property type="molecule type" value="Genomic_DNA"/>
</dbReference>
<dbReference type="PIR" id="A95000">
    <property type="entry name" value="A95000"/>
</dbReference>
<dbReference type="RefSeq" id="WP_000660618.1">
    <property type="nucleotide sequence ID" value="NZ_CP155539.1"/>
</dbReference>
<dbReference type="SMR" id="O08397"/>
<dbReference type="PaxDb" id="170187-SP_0001"/>
<dbReference type="EnsemblBacteria" id="AAK74194">
    <property type="protein sequence ID" value="AAK74194"/>
    <property type="gene ID" value="SP_0001"/>
</dbReference>
<dbReference type="KEGG" id="spn:SP_0001"/>
<dbReference type="eggNOG" id="COG0593">
    <property type="taxonomic scope" value="Bacteria"/>
</dbReference>
<dbReference type="PhylomeDB" id="O08397"/>
<dbReference type="BioCyc" id="SPNE170187:G1FZB-1-MONOMER"/>
<dbReference type="Proteomes" id="UP000000585">
    <property type="component" value="Chromosome"/>
</dbReference>
<dbReference type="GO" id="GO:0005737">
    <property type="term" value="C:cytoplasm"/>
    <property type="evidence" value="ECO:0007669"/>
    <property type="project" value="UniProtKB-SubCell"/>
</dbReference>
<dbReference type="GO" id="GO:0005886">
    <property type="term" value="C:plasma membrane"/>
    <property type="evidence" value="ECO:0007669"/>
    <property type="project" value="TreeGrafter"/>
</dbReference>
<dbReference type="GO" id="GO:0005524">
    <property type="term" value="F:ATP binding"/>
    <property type="evidence" value="ECO:0007669"/>
    <property type="project" value="UniProtKB-UniRule"/>
</dbReference>
<dbReference type="GO" id="GO:0016887">
    <property type="term" value="F:ATP hydrolysis activity"/>
    <property type="evidence" value="ECO:0007669"/>
    <property type="project" value="InterPro"/>
</dbReference>
<dbReference type="GO" id="GO:0003688">
    <property type="term" value="F:DNA replication origin binding"/>
    <property type="evidence" value="ECO:0007669"/>
    <property type="project" value="UniProtKB-UniRule"/>
</dbReference>
<dbReference type="GO" id="GO:0008289">
    <property type="term" value="F:lipid binding"/>
    <property type="evidence" value="ECO:0007669"/>
    <property type="project" value="UniProtKB-KW"/>
</dbReference>
<dbReference type="GO" id="GO:0006270">
    <property type="term" value="P:DNA replication initiation"/>
    <property type="evidence" value="ECO:0007669"/>
    <property type="project" value="UniProtKB-UniRule"/>
</dbReference>
<dbReference type="GO" id="GO:0006275">
    <property type="term" value="P:regulation of DNA replication"/>
    <property type="evidence" value="ECO:0007669"/>
    <property type="project" value="UniProtKB-UniRule"/>
</dbReference>
<dbReference type="CDD" id="cd00009">
    <property type="entry name" value="AAA"/>
    <property type="match status" value="1"/>
</dbReference>
<dbReference type="CDD" id="cd06571">
    <property type="entry name" value="Bac_DnaA_C"/>
    <property type="match status" value="1"/>
</dbReference>
<dbReference type="FunFam" id="1.10.1750.10:FF:000002">
    <property type="entry name" value="Chromosomal replication initiator protein DnaA"/>
    <property type="match status" value="1"/>
</dbReference>
<dbReference type="FunFam" id="1.10.8.60:FF:000129">
    <property type="entry name" value="Chromosomal replication initiator protein DnaA"/>
    <property type="match status" value="1"/>
</dbReference>
<dbReference type="FunFam" id="3.40.50.300:FF:000668">
    <property type="entry name" value="Chromosomal replication initiator protein DnaA"/>
    <property type="match status" value="1"/>
</dbReference>
<dbReference type="Gene3D" id="1.10.1750.10">
    <property type="match status" value="1"/>
</dbReference>
<dbReference type="Gene3D" id="1.10.8.60">
    <property type="match status" value="1"/>
</dbReference>
<dbReference type="Gene3D" id="3.40.50.300">
    <property type="entry name" value="P-loop containing nucleotide triphosphate hydrolases"/>
    <property type="match status" value="1"/>
</dbReference>
<dbReference type="HAMAP" id="MF_00377">
    <property type="entry name" value="DnaA_bact"/>
    <property type="match status" value="1"/>
</dbReference>
<dbReference type="InterPro" id="IPR003593">
    <property type="entry name" value="AAA+_ATPase"/>
</dbReference>
<dbReference type="InterPro" id="IPR001957">
    <property type="entry name" value="Chromosome_initiator_DnaA"/>
</dbReference>
<dbReference type="InterPro" id="IPR020591">
    <property type="entry name" value="Chromosome_initiator_DnaA-like"/>
</dbReference>
<dbReference type="InterPro" id="IPR018312">
    <property type="entry name" value="Chromosome_initiator_DnaA_CS"/>
</dbReference>
<dbReference type="InterPro" id="IPR013159">
    <property type="entry name" value="DnaA_C"/>
</dbReference>
<dbReference type="InterPro" id="IPR013317">
    <property type="entry name" value="DnaA_dom"/>
</dbReference>
<dbReference type="InterPro" id="IPR027417">
    <property type="entry name" value="P-loop_NTPase"/>
</dbReference>
<dbReference type="InterPro" id="IPR010921">
    <property type="entry name" value="Trp_repressor/repl_initiator"/>
</dbReference>
<dbReference type="NCBIfam" id="TIGR00362">
    <property type="entry name" value="DnaA"/>
    <property type="match status" value="1"/>
</dbReference>
<dbReference type="PANTHER" id="PTHR30050">
    <property type="entry name" value="CHROMOSOMAL REPLICATION INITIATOR PROTEIN DNAA"/>
    <property type="match status" value="1"/>
</dbReference>
<dbReference type="PANTHER" id="PTHR30050:SF2">
    <property type="entry name" value="CHROMOSOMAL REPLICATION INITIATOR PROTEIN DNAA"/>
    <property type="match status" value="1"/>
</dbReference>
<dbReference type="Pfam" id="PF00308">
    <property type="entry name" value="Bac_DnaA"/>
    <property type="match status" value="1"/>
</dbReference>
<dbReference type="Pfam" id="PF08299">
    <property type="entry name" value="Bac_DnaA_C"/>
    <property type="match status" value="1"/>
</dbReference>
<dbReference type="PRINTS" id="PR00051">
    <property type="entry name" value="DNAA"/>
</dbReference>
<dbReference type="SMART" id="SM00382">
    <property type="entry name" value="AAA"/>
    <property type="match status" value="1"/>
</dbReference>
<dbReference type="SMART" id="SM00760">
    <property type="entry name" value="Bac_DnaA_C"/>
    <property type="match status" value="1"/>
</dbReference>
<dbReference type="SUPFAM" id="SSF52540">
    <property type="entry name" value="P-loop containing nucleoside triphosphate hydrolases"/>
    <property type="match status" value="1"/>
</dbReference>
<dbReference type="SUPFAM" id="SSF48295">
    <property type="entry name" value="TrpR-like"/>
    <property type="match status" value="1"/>
</dbReference>
<dbReference type="PROSITE" id="PS01008">
    <property type="entry name" value="DNAA"/>
    <property type="match status" value="1"/>
</dbReference>
<gene>
    <name evidence="1" type="primary">dnaA</name>
    <name type="ordered locus">SP_0001</name>
</gene>
<proteinExistence type="inferred from homology"/>
<keyword id="KW-0067">ATP-binding</keyword>
<keyword id="KW-0963">Cytoplasm</keyword>
<keyword id="KW-0235">DNA replication</keyword>
<keyword id="KW-0238">DNA-binding</keyword>
<keyword id="KW-0446">Lipid-binding</keyword>
<keyword id="KW-0547">Nucleotide-binding</keyword>
<keyword id="KW-1185">Reference proteome</keyword>
<sequence>MKEKQFWNRILEFAQERLTRSMYDFYAIQAELIKVEENVATIFLPRSEMEMVWEKQLKDIIVVAGFEIYDAEITPHYIFTKPQDTTSSQVEEATNLTLYNYSPKLVSIPYSDTGLKEKYTFDNFIQGDGNVWAVSAALAVSEDLALTYNPLFIYGGPGLGKTHLLNAIGNEILKNIPNARVKYIPAESFINDFLDHLRLGEMEKFKKTYRSLDLLLIDDIQSLSGKKVATQEEFFNTFNALHDKQKQIVLTSDRSPKHLEGLEERLVTRFSWGLTQTITPPDFETRIAILQSKTEHLGYNFQSDTLEYLAGQFDSNVRDLEGAINDITLIARVKKIKDITIDIAAEAIRARKQDVSQMLVIPIDKIQTEVGNFYGVSIKEMKGSRRLQNIVLARQVAMYLSRELTDNSLPKIGKEFGGKDHTTVIHAHAKIKSLIDQDDNLRLEIESIKKKIK</sequence>